<comment type="function">
    <text evidence="3">Required for karyogamy during female gametophyte development, when the two polar nuclei fuse to form the diploid central cell nucleus.</text>
</comment>
<comment type="disruption phenotype">
    <text evidence="3">Failure of fusion of the polar nuclei during megagametogenesis.</text>
</comment>
<proteinExistence type="evidence at protein level"/>
<name>NFD2_ARATH</name>
<accession>Q9FYL8</accession>
<protein>
    <recommendedName>
        <fullName evidence="4">Protein NUCLEAR FUSION DEFECTIVE 2</fullName>
    </recommendedName>
</protein>
<sequence length="191" mass="20742">MATLRFTLLLLVFVVGIFFSFSSVSHVRATSEINLRIEPFSSPFATDLAKLQTQIGYKFNNINLLRRAMTHASFSQENNKALSIFGTHIIETAVSLQFLAKDIDISSKALGRLISEVSNVESSCALDGDRLGLGKIIRVSTKTDASNSAILCTGFRAIFGAIAIDAGTVDEAIKVFWKVHGARAGRLVSML</sequence>
<organism evidence="7">
    <name type="scientific">Arabidopsis thaliana</name>
    <name type="common">Mouse-ear cress</name>
    <dbReference type="NCBI Taxonomy" id="3702"/>
    <lineage>
        <taxon>Eukaryota</taxon>
        <taxon>Viridiplantae</taxon>
        <taxon>Streptophyta</taxon>
        <taxon>Embryophyta</taxon>
        <taxon>Tracheophyta</taxon>
        <taxon>Spermatophyta</taxon>
        <taxon>Magnoliopsida</taxon>
        <taxon>eudicotyledons</taxon>
        <taxon>Gunneridae</taxon>
        <taxon>Pentapetalae</taxon>
        <taxon>rosids</taxon>
        <taxon>malvids</taxon>
        <taxon>Brassicales</taxon>
        <taxon>Brassicaceae</taxon>
        <taxon>Camelineae</taxon>
        <taxon>Arabidopsis</taxon>
    </lineage>
</organism>
<feature type="signal peptide" evidence="1">
    <location>
        <begin position="1"/>
        <end position="29"/>
    </location>
</feature>
<feature type="chain" id="PRO_0000431841" description="Protein NUCLEAR FUSION DEFECTIVE 2" evidence="1">
    <location>
        <begin position="30"/>
        <end position="191"/>
    </location>
</feature>
<feature type="domain" description="RNase III" evidence="2">
    <location>
        <begin position="48"/>
        <end position="167"/>
    </location>
</feature>
<dbReference type="EMBL" id="AC000103">
    <property type="protein sequence ID" value="AAF97957.1"/>
    <property type="molecule type" value="Genomic_DNA"/>
</dbReference>
<dbReference type="EMBL" id="CP002684">
    <property type="protein sequence ID" value="AEE30531.1"/>
    <property type="molecule type" value="Genomic_DNA"/>
</dbReference>
<dbReference type="EMBL" id="AY045598">
    <property type="protein sequence ID" value="AAK73956.1"/>
    <property type="molecule type" value="mRNA"/>
</dbReference>
<dbReference type="EMBL" id="AY094027">
    <property type="protein sequence ID" value="AAM16183.1"/>
    <property type="molecule type" value="mRNA"/>
</dbReference>
<dbReference type="RefSeq" id="NP_173854.1">
    <property type="nucleotide sequence ID" value="NM_102290.4"/>
</dbReference>
<dbReference type="PDB" id="9H4A">
    <property type="method" value="X-ray"/>
    <property type="resolution" value="2.80 A"/>
    <property type="chains" value="A/B=30-191"/>
</dbReference>
<dbReference type="PDBsum" id="9H4A"/>
<dbReference type="SMR" id="Q9FYL8"/>
<dbReference type="FunCoup" id="Q9FYL8">
    <property type="interactions" value="105"/>
</dbReference>
<dbReference type="STRING" id="3702.Q9FYL8"/>
<dbReference type="iPTMnet" id="Q9FYL8"/>
<dbReference type="PaxDb" id="3702-AT1G24450.1"/>
<dbReference type="ProteomicsDB" id="251109"/>
<dbReference type="EnsemblPlants" id="AT1G24450.1">
    <property type="protein sequence ID" value="AT1G24450.1"/>
    <property type="gene ID" value="AT1G24450"/>
</dbReference>
<dbReference type="GeneID" id="839061"/>
<dbReference type="Gramene" id="AT1G24450.1">
    <property type="protein sequence ID" value="AT1G24450.1"/>
    <property type="gene ID" value="AT1G24450"/>
</dbReference>
<dbReference type="KEGG" id="ath:AT1G24450"/>
<dbReference type="Araport" id="AT1G24450"/>
<dbReference type="TAIR" id="AT1G24450">
    <property type="gene designation" value="NFD2"/>
</dbReference>
<dbReference type="eggNOG" id="ENOG502RXH7">
    <property type="taxonomic scope" value="Eukaryota"/>
</dbReference>
<dbReference type="HOGENOM" id="CLU_126823_0_0_1"/>
<dbReference type="InParanoid" id="Q9FYL8"/>
<dbReference type="OMA" id="FWKVHGD"/>
<dbReference type="PhylomeDB" id="Q9FYL8"/>
<dbReference type="PRO" id="PR:Q9FYL8"/>
<dbReference type="Proteomes" id="UP000006548">
    <property type="component" value="Chromosome 1"/>
</dbReference>
<dbReference type="ExpressionAtlas" id="Q9FYL8">
    <property type="expression patterns" value="baseline and differential"/>
</dbReference>
<dbReference type="GO" id="GO:0005777">
    <property type="term" value="C:peroxisome"/>
    <property type="evidence" value="ECO:0000314"/>
    <property type="project" value="TAIR"/>
</dbReference>
<dbReference type="GO" id="GO:0000325">
    <property type="term" value="C:plant-type vacuole"/>
    <property type="evidence" value="ECO:0007005"/>
    <property type="project" value="TAIR"/>
</dbReference>
<dbReference type="GO" id="GO:0004525">
    <property type="term" value="F:ribonuclease III activity"/>
    <property type="evidence" value="ECO:0007669"/>
    <property type="project" value="InterPro"/>
</dbReference>
<dbReference type="GO" id="GO:0000741">
    <property type="term" value="P:karyogamy"/>
    <property type="evidence" value="ECO:0000315"/>
    <property type="project" value="UniProtKB"/>
</dbReference>
<dbReference type="GO" id="GO:0010197">
    <property type="term" value="P:polar nucleus fusion"/>
    <property type="evidence" value="ECO:0000315"/>
    <property type="project" value="UniProtKB"/>
</dbReference>
<dbReference type="GO" id="GO:0006396">
    <property type="term" value="P:RNA processing"/>
    <property type="evidence" value="ECO:0007669"/>
    <property type="project" value="InterPro"/>
</dbReference>
<dbReference type="FunFam" id="1.10.1520.10:FF:000020">
    <property type="entry name" value="Protein NUCLEAR FUSION DEFECTIVE 2"/>
    <property type="match status" value="1"/>
</dbReference>
<dbReference type="Gene3D" id="1.10.1520.10">
    <property type="entry name" value="Ribonuclease III domain"/>
    <property type="match status" value="1"/>
</dbReference>
<dbReference type="InterPro" id="IPR000999">
    <property type="entry name" value="RNase_III_dom"/>
</dbReference>
<dbReference type="InterPro" id="IPR036389">
    <property type="entry name" value="RNase_III_sf"/>
</dbReference>
<dbReference type="Pfam" id="PF14622">
    <property type="entry name" value="Ribonucleas_3_3"/>
    <property type="match status" value="1"/>
</dbReference>
<dbReference type="SMART" id="SM00535">
    <property type="entry name" value="RIBOc"/>
    <property type="match status" value="1"/>
</dbReference>
<dbReference type="SUPFAM" id="SSF69065">
    <property type="entry name" value="RNase III domain-like"/>
    <property type="match status" value="1"/>
</dbReference>
<dbReference type="PROSITE" id="PS50142">
    <property type="entry name" value="RNASE_3_2"/>
    <property type="match status" value="1"/>
</dbReference>
<reference key="1">
    <citation type="journal article" date="2000" name="Nature">
        <title>Sequence and analysis of chromosome 1 of the plant Arabidopsis thaliana.</title>
        <authorList>
            <person name="Theologis A."/>
            <person name="Ecker J.R."/>
            <person name="Palm C.J."/>
            <person name="Federspiel N.A."/>
            <person name="Kaul S."/>
            <person name="White O."/>
            <person name="Alonso J."/>
            <person name="Altafi H."/>
            <person name="Araujo R."/>
            <person name="Bowman C.L."/>
            <person name="Brooks S.Y."/>
            <person name="Buehler E."/>
            <person name="Chan A."/>
            <person name="Chao Q."/>
            <person name="Chen H."/>
            <person name="Cheuk R.F."/>
            <person name="Chin C.W."/>
            <person name="Chung M.K."/>
            <person name="Conn L."/>
            <person name="Conway A.B."/>
            <person name="Conway A.R."/>
            <person name="Creasy T.H."/>
            <person name="Dewar K."/>
            <person name="Dunn P."/>
            <person name="Etgu P."/>
            <person name="Feldblyum T.V."/>
            <person name="Feng J.-D."/>
            <person name="Fong B."/>
            <person name="Fujii C.Y."/>
            <person name="Gill J.E."/>
            <person name="Goldsmith A.D."/>
            <person name="Haas B."/>
            <person name="Hansen N.F."/>
            <person name="Hughes B."/>
            <person name="Huizar L."/>
            <person name="Hunter J.L."/>
            <person name="Jenkins J."/>
            <person name="Johnson-Hopson C."/>
            <person name="Khan S."/>
            <person name="Khaykin E."/>
            <person name="Kim C.J."/>
            <person name="Koo H.L."/>
            <person name="Kremenetskaia I."/>
            <person name="Kurtz D.B."/>
            <person name="Kwan A."/>
            <person name="Lam B."/>
            <person name="Langin-Hooper S."/>
            <person name="Lee A."/>
            <person name="Lee J.M."/>
            <person name="Lenz C.A."/>
            <person name="Li J.H."/>
            <person name="Li Y.-P."/>
            <person name="Lin X."/>
            <person name="Liu S.X."/>
            <person name="Liu Z.A."/>
            <person name="Luros J.S."/>
            <person name="Maiti R."/>
            <person name="Marziali A."/>
            <person name="Militscher J."/>
            <person name="Miranda M."/>
            <person name="Nguyen M."/>
            <person name="Nierman W.C."/>
            <person name="Osborne B.I."/>
            <person name="Pai G."/>
            <person name="Peterson J."/>
            <person name="Pham P.K."/>
            <person name="Rizzo M."/>
            <person name="Rooney T."/>
            <person name="Rowley D."/>
            <person name="Sakano H."/>
            <person name="Salzberg S.L."/>
            <person name="Schwartz J.R."/>
            <person name="Shinn P."/>
            <person name="Southwick A.M."/>
            <person name="Sun H."/>
            <person name="Tallon L.J."/>
            <person name="Tambunga G."/>
            <person name="Toriumi M.J."/>
            <person name="Town C.D."/>
            <person name="Utterback T."/>
            <person name="Van Aken S."/>
            <person name="Vaysberg M."/>
            <person name="Vysotskaia V.S."/>
            <person name="Walker M."/>
            <person name="Wu D."/>
            <person name="Yu G."/>
            <person name="Fraser C.M."/>
            <person name="Venter J.C."/>
            <person name="Davis R.W."/>
        </authorList>
    </citation>
    <scope>NUCLEOTIDE SEQUENCE [LARGE SCALE GENOMIC DNA]</scope>
    <source>
        <strain>cv. Columbia</strain>
    </source>
</reference>
<reference key="2">
    <citation type="journal article" date="2017" name="Plant J.">
        <title>Araport11: a complete reannotation of the Arabidopsis thaliana reference genome.</title>
        <authorList>
            <person name="Cheng C.Y."/>
            <person name="Krishnakumar V."/>
            <person name="Chan A.P."/>
            <person name="Thibaud-Nissen F."/>
            <person name="Schobel S."/>
            <person name="Town C.D."/>
        </authorList>
    </citation>
    <scope>GENOME REANNOTATION</scope>
    <source>
        <strain>cv. Columbia</strain>
    </source>
</reference>
<reference key="3">
    <citation type="journal article" date="2003" name="Science">
        <title>Empirical analysis of transcriptional activity in the Arabidopsis genome.</title>
        <authorList>
            <person name="Yamada K."/>
            <person name="Lim J."/>
            <person name="Dale J.M."/>
            <person name="Chen H."/>
            <person name="Shinn P."/>
            <person name="Palm C.J."/>
            <person name="Southwick A.M."/>
            <person name="Wu H.C."/>
            <person name="Kim C.J."/>
            <person name="Nguyen M."/>
            <person name="Pham P.K."/>
            <person name="Cheuk R.F."/>
            <person name="Karlin-Newmann G."/>
            <person name="Liu S.X."/>
            <person name="Lam B."/>
            <person name="Sakano H."/>
            <person name="Wu T."/>
            <person name="Yu G."/>
            <person name="Miranda M."/>
            <person name="Quach H.L."/>
            <person name="Tripp M."/>
            <person name="Chang C.H."/>
            <person name="Lee J.M."/>
            <person name="Toriumi M.J."/>
            <person name="Chan M.M."/>
            <person name="Tang C.C."/>
            <person name="Onodera C.S."/>
            <person name="Deng J.M."/>
            <person name="Akiyama K."/>
            <person name="Ansari Y."/>
            <person name="Arakawa T."/>
            <person name="Banh J."/>
            <person name="Banno F."/>
            <person name="Bowser L."/>
            <person name="Brooks S.Y."/>
            <person name="Carninci P."/>
            <person name="Chao Q."/>
            <person name="Choy N."/>
            <person name="Enju A."/>
            <person name="Goldsmith A.D."/>
            <person name="Gurjal M."/>
            <person name="Hansen N.F."/>
            <person name="Hayashizaki Y."/>
            <person name="Johnson-Hopson C."/>
            <person name="Hsuan V.W."/>
            <person name="Iida K."/>
            <person name="Karnes M."/>
            <person name="Khan S."/>
            <person name="Koesema E."/>
            <person name="Ishida J."/>
            <person name="Jiang P.X."/>
            <person name="Jones T."/>
            <person name="Kawai J."/>
            <person name="Kamiya A."/>
            <person name="Meyers C."/>
            <person name="Nakajima M."/>
            <person name="Narusaka M."/>
            <person name="Seki M."/>
            <person name="Sakurai T."/>
            <person name="Satou M."/>
            <person name="Tamse R."/>
            <person name="Vaysberg M."/>
            <person name="Wallender E.K."/>
            <person name="Wong C."/>
            <person name="Yamamura Y."/>
            <person name="Yuan S."/>
            <person name="Shinozaki K."/>
            <person name="Davis R.W."/>
            <person name="Theologis A."/>
            <person name="Ecker J.R."/>
        </authorList>
    </citation>
    <scope>NUCLEOTIDE SEQUENCE [LARGE SCALE MRNA]</scope>
    <source>
        <strain>cv. Columbia</strain>
    </source>
</reference>
<reference key="4">
    <citation type="journal article" date="2006" name="Plant Physiol.">
        <title>NUCLEAR FUSION DEFECTIVE1 encodes the Arabidopsis RPL21M protein and is required for karyogamy during female gametophyte development and fertilization.</title>
        <authorList>
            <person name="Portereiko M.F."/>
            <person name="Sandaklie-Nikolova L."/>
            <person name="Lloyd A."/>
            <person name="Dever C.A."/>
            <person name="Otsuga D."/>
            <person name="Drews G.N."/>
        </authorList>
    </citation>
    <scope>FUNCTION</scope>
    <scope>DISRUPTION PHENOTYPE</scope>
    <source>
        <strain>cv. Columbia</strain>
    </source>
</reference>
<gene>
    <name evidence="4" type="primary">NFD2</name>
    <name evidence="5" type="ordered locus">At1g24450</name>
    <name evidence="6" type="ORF">F21J9.11</name>
</gene>
<keyword id="KW-0002">3D-structure</keyword>
<keyword id="KW-0217">Developmental protein</keyword>
<keyword id="KW-0415">Karyogamy</keyword>
<keyword id="KW-1185">Reference proteome</keyword>
<keyword id="KW-0732">Signal</keyword>
<evidence type="ECO:0000255" key="1"/>
<evidence type="ECO:0000255" key="2">
    <source>
        <dbReference type="PROSITE-ProRule" id="PRU00177"/>
    </source>
</evidence>
<evidence type="ECO:0000269" key="3">
    <source>
    </source>
</evidence>
<evidence type="ECO:0000303" key="4">
    <source>
    </source>
</evidence>
<evidence type="ECO:0000312" key="5">
    <source>
        <dbReference type="Araport" id="AT1G24450"/>
    </source>
</evidence>
<evidence type="ECO:0000312" key="6">
    <source>
        <dbReference type="EMBL" id="AAF97957.1"/>
    </source>
</evidence>
<evidence type="ECO:0000312" key="7">
    <source>
        <dbReference type="Proteomes" id="UP000006548"/>
    </source>
</evidence>